<sequence>MTTSWVLQSKDLSNTDLVHIAKLAEQAERYDDMAAAMKRYTEASGNLGNEERNLLSVAYKNVVGARRSAWRVIHGSEMKAVNDRTKKQIAEEYRIKMEKELNTICNQVLALLEDYLLPNASPDDSKVFFLKMQGDYYRYLAEVATDDARTEVVQKSLDAYTKATTAAENLPTTHPIRLGLALNFSVFFYEIQNDAAKACELAKSAFDSAIAELDQLQDDSYKDSTLIMQLLRDNLTLWASDQTAEGDVENDS</sequence>
<evidence type="ECO:0000305" key="1"/>
<feature type="chain" id="PRO_0000058661" description="14-3-3 protein homolog 1">
    <location>
        <begin position="1"/>
        <end position="252"/>
    </location>
</feature>
<name>14331_SCHMA</name>
<dbReference type="EMBL" id="U24281">
    <property type="protein sequence ID" value="AAC46983.1"/>
    <property type="molecule type" value="mRNA"/>
</dbReference>
<dbReference type="RefSeq" id="XP_018644942.1">
    <property type="nucleotide sequence ID" value="XM_018792041.1"/>
</dbReference>
<dbReference type="SMR" id="Q26540"/>
<dbReference type="STRING" id="6183.Q26540"/>
<dbReference type="EnsemblMetazoa" id="Smp_009760.1">
    <property type="protein sequence ID" value="Smp_009760.1"/>
    <property type="gene ID" value="Smp_009760"/>
</dbReference>
<dbReference type="GeneID" id="8352517"/>
<dbReference type="KEGG" id="smm:Smp_009760"/>
<dbReference type="WBParaSite" id="Smp_009760.1">
    <property type="protein sequence ID" value="Smp_009760.1"/>
    <property type="gene ID" value="Smp_009760"/>
</dbReference>
<dbReference type="CTD" id="8352517"/>
<dbReference type="eggNOG" id="KOG0841">
    <property type="taxonomic scope" value="Eukaryota"/>
</dbReference>
<dbReference type="HOGENOM" id="CLU_058290_0_0_1"/>
<dbReference type="InParanoid" id="Q26540"/>
<dbReference type="OMA" id="YDEMVNE"/>
<dbReference type="OrthoDB" id="10260625at2759"/>
<dbReference type="PhylomeDB" id="Q26540"/>
<dbReference type="Proteomes" id="UP000008854">
    <property type="component" value="Unassembled WGS sequence"/>
</dbReference>
<dbReference type="ExpressionAtlas" id="Q26540">
    <property type="expression patterns" value="differential"/>
</dbReference>
<dbReference type="CDD" id="cd08774">
    <property type="entry name" value="14-3-3"/>
    <property type="match status" value="1"/>
</dbReference>
<dbReference type="FunFam" id="1.20.190.20:FF:000001">
    <property type="entry name" value="14-3-3 gamma 1"/>
    <property type="match status" value="1"/>
</dbReference>
<dbReference type="Gene3D" id="1.20.190.20">
    <property type="entry name" value="14-3-3 domain"/>
    <property type="match status" value="1"/>
</dbReference>
<dbReference type="InterPro" id="IPR000308">
    <property type="entry name" value="14-3-3"/>
</dbReference>
<dbReference type="InterPro" id="IPR023409">
    <property type="entry name" value="14-3-3_CS"/>
</dbReference>
<dbReference type="InterPro" id="IPR036815">
    <property type="entry name" value="14-3-3_dom_sf"/>
</dbReference>
<dbReference type="InterPro" id="IPR023410">
    <property type="entry name" value="14-3-3_domain"/>
</dbReference>
<dbReference type="PANTHER" id="PTHR18860">
    <property type="entry name" value="14-3-3 PROTEIN"/>
    <property type="match status" value="1"/>
</dbReference>
<dbReference type="Pfam" id="PF00244">
    <property type="entry name" value="14-3-3"/>
    <property type="match status" value="1"/>
</dbReference>
<dbReference type="PIRSF" id="PIRSF000868">
    <property type="entry name" value="14-3-3"/>
    <property type="match status" value="1"/>
</dbReference>
<dbReference type="PRINTS" id="PR00305">
    <property type="entry name" value="1433ZETA"/>
</dbReference>
<dbReference type="SMART" id="SM00101">
    <property type="entry name" value="14_3_3"/>
    <property type="match status" value="1"/>
</dbReference>
<dbReference type="SUPFAM" id="SSF48445">
    <property type="entry name" value="14-3-3 protein"/>
    <property type="match status" value="1"/>
</dbReference>
<dbReference type="PROSITE" id="PS00796">
    <property type="entry name" value="1433_1"/>
    <property type="match status" value="1"/>
</dbReference>
<dbReference type="PROSITE" id="PS00797">
    <property type="entry name" value="1433_2"/>
    <property type="match status" value="1"/>
</dbReference>
<keyword id="KW-1185">Reference proteome</keyword>
<reference key="1">
    <citation type="journal article" date="1995" name="Mol. Biochem. Parasitol.">
        <title>Stage-specific expression of the mRNA encoding a 14-3-3 protein during the life cycle of Schistosoma mansoni.</title>
        <authorList>
            <person name="Schechtman D."/>
            <person name="Ram D."/>
            <person name="Tarrab-Hazdai R."/>
            <person name="Arnon R."/>
            <person name="Schechter I."/>
        </authorList>
    </citation>
    <scope>NUCLEOTIDE SEQUENCE [MRNA]</scope>
    <source>
        <strain>Puerto Rican</strain>
    </source>
</reference>
<comment type="similarity">
    <text evidence="1">Belongs to the 14-3-3 family.</text>
</comment>
<organism>
    <name type="scientific">Schistosoma mansoni</name>
    <name type="common">Blood fluke</name>
    <dbReference type="NCBI Taxonomy" id="6183"/>
    <lineage>
        <taxon>Eukaryota</taxon>
        <taxon>Metazoa</taxon>
        <taxon>Spiralia</taxon>
        <taxon>Lophotrochozoa</taxon>
        <taxon>Platyhelminthes</taxon>
        <taxon>Trematoda</taxon>
        <taxon>Digenea</taxon>
        <taxon>Strigeidida</taxon>
        <taxon>Schistosomatoidea</taxon>
        <taxon>Schistosomatidae</taxon>
        <taxon>Schistosoma</taxon>
    </lineage>
</organism>
<proteinExistence type="evidence at transcript level"/>
<protein>
    <recommendedName>
        <fullName>14-3-3 protein homolog 1</fullName>
    </recommendedName>
</protein>
<accession>Q26540</accession>